<keyword id="KW-0168">Coated pit</keyword>
<keyword id="KW-0175">Coiled coil</keyword>
<keyword id="KW-0968">Cytoplasmic vesicle</keyword>
<keyword id="KW-0472">Membrane</keyword>
<keyword id="KW-1185">Reference proteome</keyword>
<keyword id="KW-0677">Repeat</keyword>
<proteinExistence type="evidence at protein level"/>
<comment type="function">
    <text evidence="3 4 6 7 9 10 11">Clathrin is the major protein of the polyhedral coat of coated pits and vesicles.</text>
</comment>
<comment type="subunit">
    <text>Clathrin coats are formed from molecules containing 3 heavy chains and 3 light chains.</text>
</comment>
<comment type="subcellular location">
    <subcellularLocation>
        <location evidence="5">Cytoplasmic vesicle membrane</location>
        <topology evidence="5">Peripheral membrane protein</topology>
        <orientation evidence="5">Cytoplasmic side</orientation>
    </subcellularLocation>
    <subcellularLocation>
        <location evidence="5">Membrane</location>
        <location evidence="5">Coated pit</location>
        <topology evidence="5">Peripheral membrane protein</topology>
        <orientation evidence="5">Cytoplasmic side</orientation>
    </subcellularLocation>
    <text>Cytoplasmic face of coated pits and vesicles. Localized to punctae scattered within the cytoplasm, along the plasma membrane and concentrated in the perinuclear region. Localizes to the posterior plasma membrane in cells which retract their tails when moving forward or changing direction. Recruited to the plasma membrane under the tight cap of cross-linked receptors prior to internalization of the capped ligand. Does not localize to the plasma membrane during phagocytosis.</text>
</comment>
<comment type="developmental stage">
    <text evidence="8">Expressed at highest levels in vegetatively growing cells. Expression declines during development.</text>
</comment>
<comment type="domain">
    <text>The C-terminal third of the heavy chains forms the hub of the triskelion. This region contains the trimerization domain and the light-chain binding domain involved in the assembly of the clathrin lattice.</text>
</comment>
<comment type="domain">
    <text evidence="1">The N-terminal seven-bladed beta-propeller is formed by WD40-like repeats, and projects inward from the polyhedral outer clathrin coat. It constitutes a major protein-protein interaction node (By similarity).</text>
</comment>
<comment type="disruption phenotype">
    <text evidence="3 4 6 9 10 11">Cells display lacks of coated pits, lacks of coated vesicles and large translucent vesicles that serve as endosomes and contractile vacuoles, and displays impaired macropinocytosis and osmoregulation defects. Phagocytosis is normal in loss-of-function mutant. Mutants lacking chcA show defects in the regulation of pseudopod formation, uropod stability, cell polarity and chemotaxis, and stream and aggregate more slowly than wild-type cells in response to starvation. Late development is impaired in mutants lacking chcA which show defects in prestalk and prespore cell patterning, and spore cells fail to differentiate. Mutants lacking chcA display defects in the sorting of precursor hydrolases from the constitutive secretory pathway to the lysosomal pathway, and reduced secretion of mature alpha-mannosidase from the lysosome to the extracellular space. Mutants lacking chcA fail to undergo cytokinesis in suspension culture due to the failure to assemble a functional contractile ring.</text>
</comment>
<comment type="similarity">
    <text evidence="12">Belongs to the clathrin heavy chain family.</text>
</comment>
<protein>
    <recommendedName>
        <fullName>Clathrin heavy chain</fullName>
    </recommendedName>
</protein>
<gene>
    <name type="primary">chcA</name>
    <name type="ORF">DDB_G0277221</name>
</gene>
<evidence type="ECO:0000250" key="1"/>
<evidence type="ECO:0000255" key="2"/>
<evidence type="ECO:0000269" key="3">
    <source>
    </source>
</evidence>
<evidence type="ECO:0000269" key="4">
    <source>
    </source>
</evidence>
<evidence type="ECO:0000269" key="5">
    <source>
    </source>
</evidence>
<evidence type="ECO:0000269" key="6">
    <source>
    </source>
</evidence>
<evidence type="ECO:0000269" key="7">
    <source>
    </source>
</evidence>
<evidence type="ECO:0000269" key="8">
    <source>
    </source>
</evidence>
<evidence type="ECO:0000269" key="9">
    <source>
    </source>
</evidence>
<evidence type="ECO:0000269" key="10">
    <source>
    </source>
</evidence>
<evidence type="ECO:0000269" key="11">
    <source>
    </source>
</evidence>
<evidence type="ECO:0000305" key="12"/>
<dbReference type="EMBL" id="M83660">
    <property type="protein sequence ID" value="AAA33179.1"/>
    <property type="molecule type" value="mRNA"/>
</dbReference>
<dbReference type="EMBL" id="AAFI02000019">
    <property type="protein sequence ID" value="EAL68796.1"/>
    <property type="molecule type" value="Genomic_DNA"/>
</dbReference>
<dbReference type="RefSeq" id="XP_642717.1">
    <property type="nucleotide sequence ID" value="XM_637625.1"/>
</dbReference>
<dbReference type="SMR" id="P25870"/>
<dbReference type="FunCoup" id="P25870">
    <property type="interactions" value="973"/>
</dbReference>
<dbReference type="IntAct" id="P25870">
    <property type="interactions" value="1"/>
</dbReference>
<dbReference type="STRING" id="44689.P25870"/>
<dbReference type="PaxDb" id="44689-DDB0185029"/>
<dbReference type="EnsemblProtists" id="EAL68796">
    <property type="protein sequence ID" value="EAL68796"/>
    <property type="gene ID" value="DDB_G0277221"/>
</dbReference>
<dbReference type="GeneID" id="8620910"/>
<dbReference type="KEGG" id="ddi:DDB_G0277221"/>
<dbReference type="dictyBase" id="DDB_G0277221">
    <property type="gene designation" value="chcA"/>
</dbReference>
<dbReference type="VEuPathDB" id="AmoebaDB:DDB_G0277221"/>
<dbReference type="eggNOG" id="KOG0985">
    <property type="taxonomic scope" value="Eukaryota"/>
</dbReference>
<dbReference type="HOGENOM" id="CLU_002136_0_0_1"/>
<dbReference type="InParanoid" id="P25870"/>
<dbReference type="OMA" id="HCYDLLH"/>
<dbReference type="PhylomeDB" id="P25870"/>
<dbReference type="Reactome" id="R-DDI-432720">
    <property type="pathway name" value="Lysosome Vesicle Biogenesis"/>
</dbReference>
<dbReference type="Reactome" id="R-DDI-437239">
    <property type="pathway name" value="Recycling pathway of L1"/>
</dbReference>
<dbReference type="Reactome" id="R-DDI-8856828">
    <property type="pathway name" value="Clathrin-mediated endocytosis"/>
</dbReference>
<dbReference type="Reactome" id="R-DDI-8866427">
    <property type="pathway name" value="VLDLR internalisation and degradation"/>
</dbReference>
<dbReference type="Reactome" id="R-DDI-8964038">
    <property type="pathway name" value="LDL clearance"/>
</dbReference>
<dbReference type="Reactome" id="R-DDI-9013420">
    <property type="pathway name" value="RHOU GTPase cycle"/>
</dbReference>
<dbReference type="Reactome" id="R-DDI-9013424">
    <property type="pathway name" value="RHOV GTPase cycle"/>
</dbReference>
<dbReference type="PRO" id="PR:P25870"/>
<dbReference type="Proteomes" id="UP000002195">
    <property type="component" value="Chromosome 2"/>
</dbReference>
<dbReference type="GO" id="GO:0030118">
    <property type="term" value="C:clathrin coat"/>
    <property type="evidence" value="ECO:0000314"/>
    <property type="project" value="dictyBase"/>
</dbReference>
<dbReference type="GO" id="GO:0030132">
    <property type="term" value="C:clathrin coat of coated pit"/>
    <property type="evidence" value="ECO:0007669"/>
    <property type="project" value="InterPro"/>
</dbReference>
<dbReference type="GO" id="GO:0030130">
    <property type="term" value="C:clathrin coat of trans-Golgi network vesicle"/>
    <property type="evidence" value="ECO:0007669"/>
    <property type="project" value="InterPro"/>
</dbReference>
<dbReference type="GO" id="GO:0071439">
    <property type="term" value="C:clathrin complex"/>
    <property type="evidence" value="ECO:0000314"/>
    <property type="project" value="dictyBase"/>
</dbReference>
<dbReference type="GO" id="GO:0140220">
    <property type="term" value="C:pathogen-containing vacuole"/>
    <property type="evidence" value="ECO:0007005"/>
    <property type="project" value="dictyBase"/>
</dbReference>
<dbReference type="GO" id="GO:0032051">
    <property type="term" value="F:clathrin light chain binding"/>
    <property type="evidence" value="ECO:0000318"/>
    <property type="project" value="GO_Central"/>
</dbReference>
<dbReference type="GO" id="GO:0005198">
    <property type="term" value="F:structural molecule activity"/>
    <property type="evidence" value="ECO:0007669"/>
    <property type="project" value="InterPro"/>
</dbReference>
<dbReference type="GO" id="GO:0000915">
    <property type="term" value="P:actomyosin contractile ring assembly"/>
    <property type="evidence" value="ECO:0000315"/>
    <property type="project" value="dictyBase"/>
</dbReference>
<dbReference type="GO" id="GO:0031152">
    <property type="term" value="P:aggregation involved in sorocarp development"/>
    <property type="evidence" value="ECO:0000315"/>
    <property type="project" value="dictyBase"/>
</dbReference>
<dbReference type="GO" id="GO:0048268">
    <property type="term" value="P:clathrin coat assembly"/>
    <property type="evidence" value="ECO:0000315"/>
    <property type="project" value="dictyBase"/>
</dbReference>
<dbReference type="GO" id="GO:0072583">
    <property type="term" value="P:clathrin-dependent endocytosis"/>
    <property type="evidence" value="ECO:0000315"/>
    <property type="project" value="dictyBase"/>
</dbReference>
<dbReference type="GO" id="GO:0006886">
    <property type="term" value="P:intracellular protein transport"/>
    <property type="evidence" value="ECO:0007669"/>
    <property type="project" value="InterPro"/>
</dbReference>
<dbReference type="GO" id="GO:0007041">
    <property type="term" value="P:lysosomal transport"/>
    <property type="evidence" value="ECO:0000315"/>
    <property type="project" value="dictyBase"/>
</dbReference>
<dbReference type="GO" id="GO:0000281">
    <property type="term" value="P:mitotic cytokinesis"/>
    <property type="evidence" value="ECO:0000315"/>
    <property type="project" value="dictyBase"/>
</dbReference>
<dbReference type="GO" id="GO:0006907">
    <property type="term" value="P:pinocytosis"/>
    <property type="evidence" value="ECO:0000315"/>
    <property type="project" value="dictyBase"/>
</dbReference>
<dbReference type="GO" id="GO:0006898">
    <property type="term" value="P:receptor-mediated endocytosis"/>
    <property type="evidence" value="ECO:0000315"/>
    <property type="project" value="dictyBase"/>
</dbReference>
<dbReference type="GO" id="GO:0006970">
    <property type="term" value="P:response to osmotic stress"/>
    <property type="evidence" value="ECO:0000315"/>
    <property type="project" value="dictyBase"/>
</dbReference>
<dbReference type="GO" id="GO:0030435">
    <property type="term" value="P:sporulation resulting in formation of a cellular spore"/>
    <property type="evidence" value="ECO:0000315"/>
    <property type="project" value="dictyBase"/>
</dbReference>
<dbReference type="GO" id="GO:0007033">
    <property type="term" value="P:vacuole organization"/>
    <property type="evidence" value="ECO:0000315"/>
    <property type="project" value="dictyBase"/>
</dbReference>
<dbReference type="FunFam" id="1.25.40.10:FF:000001">
    <property type="entry name" value="Clathrin heavy chain"/>
    <property type="match status" value="1"/>
</dbReference>
<dbReference type="FunFam" id="1.25.40.10:FF:000002">
    <property type="entry name" value="Clathrin heavy chain"/>
    <property type="match status" value="1"/>
</dbReference>
<dbReference type="FunFam" id="1.25.40.10:FF:000005">
    <property type="entry name" value="Clathrin heavy chain"/>
    <property type="match status" value="1"/>
</dbReference>
<dbReference type="FunFam" id="1.25.40.10:FF:000686">
    <property type="entry name" value="Clathrin heavy chain"/>
    <property type="match status" value="1"/>
</dbReference>
<dbReference type="FunFam" id="1.25.40.730:FF:000002">
    <property type="entry name" value="Clathrin heavy chain"/>
    <property type="match status" value="1"/>
</dbReference>
<dbReference type="FunFam" id="2.130.10.110:FF:000003">
    <property type="entry name" value="Clathrin heavy chain"/>
    <property type="match status" value="1"/>
</dbReference>
<dbReference type="Gene3D" id="1.25.40.730">
    <property type="match status" value="1"/>
</dbReference>
<dbReference type="Gene3D" id="2.130.10.110">
    <property type="entry name" value="Clathrin heavy-chain terminal domain"/>
    <property type="match status" value="1"/>
</dbReference>
<dbReference type="Gene3D" id="1.25.40.10">
    <property type="entry name" value="Tetratricopeptide repeat domain"/>
    <property type="match status" value="4"/>
</dbReference>
<dbReference type="InterPro" id="IPR016024">
    <property type="entry name" value="ARM-type_fold"/>
</dbReference>
<dbReference type="InterPro" id="IPR055358">
    <property type="entry name" value="CHCR"/>
</dbReference>
<dbReference type="InterPro" id="IPR000547">
    <property type="entry name" value="Clathrin_H-chain/VPS_repeat"/>
</dbReference>
<dbReference type="InterPro" id="IPR015348">
    <property type="entry name" value="Clathrin_H-chain_linker_core"/>
</dbReference>
<dbReference type="InterPro" id="IPR016025">
    <property type="entry name" value="Clathrin_H-chain_N"/>
</dbReference>
<dbReference type="InterPro" id="IPR022365">
    <property type="entry name" value="Clathrin_H-chain_propeller_rpt"/>
</dbReference>
<dbReference type="InterPro" id="IPR016341">
    <property type="entry name" value="Clathrin_heavy_chain"/>
</dbReference>
<dbReference type="InterPro" id="IPR011990">
    <property type="entry name" value="TPR-like_helical_dom_sf"/>
</dbReference>
<dbReference type="PANTHER" id="PTHR10292:SF1">
    <property type="entry name" value="CLATHRIN HEAVY CHAIN"/>
    <property type="match status" value="1"/>
</dbReference>
<dbReference type="PANTHER" id="PTHR10292">
    <property type="entry name" value="CLATHRIN HEAVY CHAIN RELATED"/>
    <property type="match status" value="1"/>
</dbReference>
<dbReference type="Pfam" id="PF00637">
    <property type="entry name" value="Clathrin"/>
    <property type="match status" value="7"/>
</dbReference>
<dbReference type="Pfam" id="PF09268">
    <property type="entry name" value="Clathrin-link"/>
    <property type="match status" value="1"/>
</dbReference>
<dbReference type="Pfam" id="PF13838">
    <property type="entry name" value="Clathrin_H_link"/>
    <property type="match status" value="1"/>
</dbReference>
<dbReference type="Pfam" id="PF01394">
    <property type="entry name" value="Clathrin_propel"/>
    <property type="match status" value="4"/>
</dbReference>
<dbReference type="PIRSF" id="PIRSF002290">
    <property type="entry name" value="Clathrin_H_chain"/>
    <property type="match status" value="1"/>
</dbReference>
<dbReference type="SMART" id="SM00299">
    <property type="entry name" value="CLH"/>
    <property type="match status" value="7"/>
</dbReference>
<dbReference type="SUPFAM" id="SSF48371">
    <property type="entry name" value="ARM repeat"/>
    <property type="match status" value="6"/>
</dbReference>
<dbReference type="SUPFAM" id="SSF50989">
    <property type="entry name" value="Clathrin heavy-chain terminal domain"/>
    <property type="match status" value="1"/>
</dbReference>
<dbReference type="PROSITE" id="PS50236">
    <property type="entry name" value="CHCR"/>
    <property type="match status" value="7"/>
</dbReference>
<sequence>MTNLPIRFQEVLQLTNLGIGSNSIGFSTLTMESEKYICIRETTPDDKNNVVIIDTDNPSQILRKQMKTDAAIMNPKEPILALKIGQVLQLISIEQKMQLKSCQMQEPLEFWKWISPNTLALVTATSVFHWTKEGNSDPVKVFDRHPDLQNTEIINYRSDSTQNWLVLVAIHQRDGRVVGRIQLYSVEKQISQSIEGHAACFANYIVPGATRPSTLFAISSRTQNASKILVLEVSKGDGPNFQKRASDVFYPPEIGASDFPVAMQVSEKYEVIYMVTKLGYIHLFDLGTANLIYRNRISNENIFVTAFEESTNGIIAVNRKGQVLSVSIDDKNIIPYICNTLNNLELAISMACKNNLPGAEGLLTTQFERYFQQGQYKEAAKVAADSPGSILRNLQTIQKFQSIPPIPDQPSALLQYFGMLLEKGKLNKVESLELVRPVLAQGKKPILEKWLTEDKLECSEQLGDEVRPHDRKLALSIYYRANASDKVITLFAETGEFDKIIAYCKKFNYKPDFMFLLQRMANANPMGAADFAVKLVKEEGGPYIDANQVVELFSARNMIQETSNFLFAILDGDRPQDANLQTKLLEINLLHAPQNADAIMGGQKFTHYNRLRIGGLCEKAGLYQRALEHYTDLADIKRVLSHAGHMVNQEFLVSYFGSLNPEDRMECMRDFLRTNPRQNLQLVVAIAVSYSDQITPEAIIAMFESFRLYEGLYLYLTQVVVTSTSPEVHFKYIEAAAKINQFKEVERMCRDSNYYDPEKTRDFLKEAKLPDQLPLIIVCDRYEFISDLTNYLYKNNLSKYIEAYVQKINPVNTPLVVGALLDLDCQEDYLRNLIMSVRNMCPADSLVEQVEKRNRLKLLLPWLEARVAEGNIEPAIHNALAKIYIDSNKNPEAFLLHNQFYDSKVVGKYCEKRDPYLSFVAYKRGLCDYELIEVTNKNTLFKNQARYLVERQDPDLWAYVLSDQNEYKRSLIDQVVQTALPESTNATEVSATVKAFMDANLPNELIELLEKIVLEGKEFKTAKELQNLLILTAIRADKSRVTDYINRLDNFDGSKLAPIAIESQLYEEAFFMYKKFQFNVEAIDVLITHIGSIERAHDFAERCNQTEVYSKLGVAQLKAEMVKECIESFIKANDTEHYQEVVAAAERKDEYEDLVKFLQMCRKKIKEPAIESELIFAYAKVNKLAEMEDFINSPNSAHIQVVGDRCFENGLYEAAKVLYTNISNFSRLTSCLVKLGQYQAAVDAARKANSTKTWKEVSAACIDAKEFRLAQVCGINIIVHGDELEELIRQYEDRGYFNELISLLESGLASERAHVGMFTELAILYSKYKEEKLMEHLKLFYSRLNVPKVIKACQANQQWPQLTYLYIHYDEHDNAIQTMINHSIEAWDHVLFKETIPKVAKLDLYYSAISFYLEEQPLLINDLLSVLSPRIDHTRAVTLIRSLGHLPLVKPYLVSAQDQNVAALNEALNELYVEEEDYESLRSSIDANSNFGTIALAQKLEKHELLEFRRIAAYLYKKNNRWAQSVELSKKDKLYKDAIQSASDSKNPAIGEELLQYFVDQQNNSAFAACLYTCYDFLKPDAVIELAWRNNILNYSFPYLIQYVKEYTTKVDQLVDDFKARQKKTEEEKEQQNIESSQYQPDLTNLSYGYAATGGMLALPPAVGYQQQQQPQQMYNPNQMMGGFQQNYNQYGGF</sequence>
<name>CLH_DICDI</name>
<reference key="1">
    <citation type="journal article" date="1992" name="DNA Cell Biol.">
        <title>Characterization of the clathrin heavy chain from Dictyostelium discoideum.</title>
        <authorList>
            <person name="O'Halloran T.J."/>
            <person name="Anderson R.G."/>
        </authorList>
    </citation>
    <scope>NUCLEOTIDE SEQUENCE [MRNA]</scope>
    <scope>DEVELOPMENTAL STAGE</scope>
    <source>
        <strain>AX3</strain>
    </source>
</reference>
<reference key="2">
    <citation type="journal article" date="2002" name="Nature">
        <title>Sequence and analysis of chromosome 2 of Dictyostelium discoideum.</title>
        <authorList>
            <person name="Gloeckner G."/>
            <person name="Eichinger L."/>
            <person name="Szafranski K."/>
            <person name="Pachebat J.A."/>
            <person name="Bankier A.T."/>
            <person name="Dear P.H."/>
            <person name="Lehmann R."/>
            <person name="Baumgart C."/>
            <person name="Parra G."/>
            <person name="Abril J.F."/>
            <person name="Guigo R."/>
            <person name="Kumpf K."/>
            <person name="Tunggal B."/>
            <person name="Cox E.C."/>
            <person name="Quail M.A."/>
            <person name="Platzer M."/>
            <person name="Rosenthal A."/>
            <person name="Noegel A.A."/>
        </authorList>
    </citation>
    <scope>NUCLEOTIDE SEQUENCE [LARGE SCALE GENOMIC DNA]</scope>
    <source>
        <strain>AX4</strain>
    </source>
</reference>
<reference key="3">
    <citation type="journal article" date="2005" name="Nature">
        <title>The genome of the social amoeba Dictyostelium discoideum.</title>
        <authorList>
            <person name="Eichinger L."/>
            <person name="Pachebat J.A."/>
            <person name="Gloeckner G."/>
            <person name="Rajandream M.A."/>
            <person name="Sucgang R."/>
            <person name="Berriman M."/>
            <person name="Song J."/>
            <person name="Olsen R."/>
            <person name="Szafranski K."/>
            <person name="Xu Q."/>
            <person name="Tunggal B."/>
            <person name="Kummerfeld S."/>
            <person name="Madera M."/>
            <person name="Konfortov B.A."/>
            <person name="Rivero F."/>
            <person name="Bankier A.T."/>
            <person name="Lehmann R."/>
            <person name="Hamlin N."/>
            <person name="Davies R."/>
            <person name="Gaudet P."/>
            <person name="Fey P."/>
            <person name="Pilcher K."/>
            <person name="Chen G."/>
            <person name="Saunders D."/>
            <person name="Sodergren E.J."/>
            <person name="Davis P."/>
            <person name="Kerhornou A."/>
            <person name="Nie X."/>
            <person name="Hall N."/>
            <person name="Anjard C."/>
            <person name="Hemphill L."/>
            <person name="Bason N."/>
            <person name="Farbrother P."/>
            <person name="Desany B."/>
            <person name="Just E."/>
            <person name="Morio T."/>
            <person name="Rost R."/>
            <person name="Churcher C.M."/>
            <person name="Cooper J."/>
            <person name="Haydock S."/>
            <person name="van Driessche N."/>
            <person name="Cronin A."/>
            <person name="Goodhead I."/>
            <person name="Muzny D.M."/>
            <person name="Mourier T."/>
            <person name="Pain A."/>
            <person name="Lu M."/>
            <person name="Harper D."/>
            <person name="Lindsay R."/>
            <person name="Hauser H."/>
            <person name="James K.D."/>
            <person name="Quiles M."/>
            <person name="Madan Babu M."/>
            <person name="Saito T."/>
            <person name="Buchrieser C."/>
            <person name="Wardroper A."/>
            <person name="Felder M."/>
            <person name="Thangavelu M."/>
            <person name="Johnson D."/>
            <person name="Knights A."/>
            <person name="Loulseged H."/>
            <person name="Mungall K.L."/>
            <person name="Oliver K."/>
            <person name="Price C."/>
            <person name="Quail M.A."/>
            <person name="Urushihara H."/>
            <person name="Hernandez J."/>
            <person name="Rabbinowitsch E."/>
            <person name="Steffen D."/>
            <person name="Sanders M."/>
            <person name="Ma J."/>
            <person name="Kohara Y."/>
            <person name="Sharp S."/>
            <person name="Simmonds M.N."/>
            <person name="Spiegler S."/>
            <person name="Tivey A."/>
            <person name="Sugano S."/>
            <person name="White B."/>
            <person name="Walker D."/>
            <person name="Woodward J.R."/>
            <person name="Winckler T."/>
            <person name="Tanaka Y."/>
            <person name="Shaulsky G."/>
            <person name="Schleicher M."/>
            <person name="Weinstock G.M."/>
            <person name="Rosenthal A."/>
            <person name="Cox E.C."/>
            <person name="Chisholm R.L."/>
            <person name="Gibbs R.A."/>
            <person name="Loomis W.F."/>
            <person name="Platzer M."/>
            <person name="Kay R.R."/>
            <person name="Williams J.G."/>
            <person name="Dear P.H."/>
            <person name="Noegel A.A."/>
            <person name="Barrell B.G."/>
            <person name="Kuspa A."/>
        </authorList>
    </citation>
    <scope>NUCLEOTIDE SEQUENCE [LARGE SCALE GENOMIC DNA]</scope>
    <source>
        <strain>AX4</strain>
    </source>
</reference>
<reference key="4">
    <citation type="journal article" date="1992" name="J. Cell Biol.">
        <title>Clathrin heavy chain is required for pinocytosis, the presence of large vacuoles, and development in Dictyostelium.</title>
        <authorList>
            <person name="O'Halloran T.J."/>
            <person name="Anderson R.G."/>
        </authorList>
    </citation>
    <scope>FUNCTION</scope>
</reference>
<reference key="5">
    <citation type="journal article" date="1994" name="J. Cell Biol.">
        <title>Clathrin heavy chain functions in sorting and secretion of lysosomal enzymes in Dictyostelium discoideum.</title>
        <authorList>
            <person name="Ruscetti T."/>
            <person name="Cardelli J.A."/>
            <person name="Niswonger M.L."/>
            <person name="O'Halloran T.J."/>
        </authorList>
    </citation>
    <scope>FUNCTION</scope>
    <scope>DISRUPTION PHENOTYPE</scope>
</reference>
<reference key="6">
    <citation type="journal article" date="1997" name="Development">
        <title>Clathrin heavy chain is required for spore cell but not stalk cell differentiation in Dictyostelium discoideum.</title>
        <authorList>
            <person name="Niswonger M.L."/>
            <person name="O'Halloran T.J."/>
        </authorList>
    </citation>
    <scope>FUNCTION</scope>
    <scope>DISRUPTION PHENOTYPE</scope>
</reference>
<reference key="7">
    <citation type="journal article" date="1997" name="Proc. Natl. Acad. Sci. U.S.A.">
        <title>A novel role for clathrin in cytokinesis.</title>
        <authorList>
            <person name="Niswonger M.L."/>
            <person name="O'Halloran T.J."/>
        </authorList>
    </citation>
    <scope>FUNCTION</scope>
    <scope>DISRUPTION PHENOTYPE</scope>
</reference>
<reference key="8">
    <citation type="journal article" date="1997" name="Protein Expr. Purif.">
        <title>Purification of clathrin heavy and light chain from Dictyostelium discoideum.</title>
        <authorList>
            <person name="Riddelle-Spencer K.S."/>
            <person name="O'Halloran T.J."/>
        </authorList>
    </citation>
    <scope>INTERACTION WITH CLC</scope>
</reference>
<reference key="9">
    <citation type="journal article" date="1999" name="Mol. Biol. Cell">
        <title>Circulation of the plasma membrane in Dictyostelium.</title>
        <authorList>
            <person name="Aguado-Velasco C."/>
            <person name="Bretscher M.S."/>
        </authorList>
    </citation>
    <scope>FUNCTION</scope>
    <scope>DISRUPTION PHENOTYPE</scope>
</reference>
<reference key="10">
    <citation type="journal article" date="2000" name="J. Cell Sci.">
        <title>Clathrin plays a novel role in the regulation of cell polarity, pseudopod formation, uropod stability and motility in Dictyostelium.</title>
        <authorList>
            <person name="Wessels D."/>
            <person name="Reynolds J."/>
            <person name="Johnson O."/>
            <person name="Voss E."/>
            <person name="Burns R."/>
            <person name="Daniels K."/>
            <person name="Garrard E."/>
            <person name="O'Halloran T.J."/>
            <person name="Soll D.R."/>
        </authorList>
    </citation>
    <scope>FUNCTION</scope>
    <scope>DISRUPTION PHENOTYPE</scope>
</reference>
<reference key="11">
    <citation type="journal article" date="2000" name="Mol. Biol. Cell">
        <title>Spatially regulated recruitment of clathrin to the plasma membrane during capping and cell translocation.</title>
        <authorList>
            <person name="Damer C.K."/>
            <person name="O'Halloran T.J."/>
        </authorList>
    </citation>
    <scope>SUBCELLULAR LOCATION</scope>
</reference>
<reference key="12">
    <citation type="journal article" date="2001" name="Cell Motil. Cytoskeleton">
        <title>Cytokinesis failure in clathrin-minus cells is caused by cleavage furrow instability.</title>
        <authorList>
            <person name="Gerald N.J."/>
            <person name="Damer C.K."/>
            <person name="O'Halloran T.J."/>
            <person name="De Lozanne A."/>
        </authorList>
    </citation>
    <scope>FUNCTION</scope>
    <scope>DISRUPTION PHENOTYPE</scope>
</reference>
<reference key="13">
    <citation type="journal article" date="2006" name="J. Proteome Res.">
        <title>Identification of novel centrosomal proteins in Dictyostelium discoideum by comparative proteomic approaches.</title>
        <authorList>
            <person name="Reinders Y."/>
            <person name="Schulz I."/>
            <person name="Graef R."/>
            <person name="Sickmann A."/>
        </authorList>
    </citation>
    <scope>IDENTIFICATION BY MASS SPECTROMETRY [LARGE SCALE ANALYSIS]</scope>
</reference>
<reference key="14">
    <citation type="journal article" date="2006" name="Traffic">
        <title>Clathrin light chain: importance of the conserved carboxy terminal domain to function in living cells.</title>
        <authorList>
            <person name="Wang J."/>
            <person name="Wang Y."/>
            <person name="O'Halloran T.J."/>
        </authorList>
    </citation>
    <scope>INTERACTION WITH CLC</scope>
</reference>
<accession>P25870</accession>
<accession>Q54ZZ9</accession>
<feature type="chain" id="PRO_0000205782" description="Clathrin heavy chain">
    <location>
        <begin position="1"/>
        <end position="1694"/>
    </location>
</feature>
<feature type="repeat" description="CHCR 1">
    <location>
        <begin position="537"/>
        <end position="681"/>
    </location>
</feature>
<feature type="repeat" description="CHCR 2">
    <location>
        <begin position="687"/>
        <end position="829"/>
    </location>
</feature>
<feature type="repeat" description="CHCR 3">
    <location>
        <begin position="834"/>
        <end position="973"/>
    </location>
</feature>
<feature type="repeat" description="CHCR 4">
    <location>
        <begin position="980"/>
        <end position="1125"/>
    </location>
</feature>
<feature type="repeat" description="CHCR 5">
    <location>
        <begin position="1129"/>
        <end position="1270"/>
    </location>
</feature>
<feature type="repeat" description="CHCR 6">
    <location>
        <begin position="1275"/>
        <end position="1421"/>
    </location>
</feature>
<feature type="repeat" description="CHCR 7">
    <location>
        <begin position="1424"/>
        <end position="1567"/>
    </location>
</feature>
<feature type="region of interest" description="Globular terminal domain">
    <location>
        <begin position="1"/>
        <end position="478"/>
    </location>
</feature>
<feature type="region of interest" description="WD40-like repeat 1">
    <location>
        <begin position="23"/>
        <end position="67"/>
    </location>
</feature>
<feature type="region of interest" description="WD40-like repeat 2">
    <location>
        <begin position="68"/>
        <end position="107"/>
    </location>
</feature>
<feature type="region of interest" description="WD40-like repeat 3">
    <location>
        <begin position="108"/>
        <end position="149"/>
    </location>
</feature>
<feature type="region of interest" description="WD40-like repeat 4">
    <location>
        <begin position="150"/>
        <end position="195"/>
    </location>
</feature>
<feature type="region of interest" description="WD40-like repeat 5">
    <location>
        <begin position="196"/>
        <end position="256"/>
    </location>
</feature>
<feature type="region of interest" description="WD40-like repeat 6">
    <location>
        <begin position="257"/>
        <end position="300"/>
    </location>
</feature>
<feature type="region of interest" description="WD40-like repeat 7">
    <location>
        <begin position="301"/>
        <end position="329"/>
    </location>
</feature>
<feature type="region of interest" description="Binding site for the uncoating ATPase, involved in lattice disassembly" evidence="2">
    <location>
        <begin position="448"/>
        <end position="464"/>
    </location>
</feature>
<feature type="region of interest" description="Flexible linker">
    <location>
        <begin position="479"/>
        <end position="522"/>
    </location>
</feature>
<feature type="region of interest" description="Heavy chain arm">
    <location>
        <begin position="523"/>
        <end position="1694"/>
    </location>
</feature>
<feature type="region of interest" description="Distal segment">
    <location>
        <begin position="523"/>
        <end status="unknown"/>
    </location>
</feature>
<feature type="region of interest" description="Involved in binding clathrin light chain" evidence="1">
    <location>
        <begin position="1214"/>
        <end position="1523"/>
    </location>
</feature>
<feature type="region of interest" description="Trimerization" evidence="1">
    <location>
        <begin position="1551"/>
        <end position="1694"/>
    </location>
</feature>
<feature type="region of interest" description="Proximal segment">
    <location>
        <begin status="unknown"/>
        <end position="1694"/>
    </location>
</feature>
<feature type="coiled-coil region" evidence="2">
    <location>
        <begin position="1610"/>
        <end position="1640"/>
    </location>
</feature>
<organism>
    <name type="scientific">Dictyostelium discoideum</name>
    <name type="common">Social amoeba</name>
    <dbReference type="NCBI Taxonomy" id="44689"/>
    <lineage>
        <taxon>Eukaryota</taxon>
        <taxon>Amoebozoa</taxon>
        <taxon>Evosea</taxon>
        <taxon>Eumycetozoa</taxon>
        <taxon>Dictyostelia</taxon>
        <taxon>Dictyosteliales</taxon>
        <taxon>Dictyosteliaceae</taxon>
        <taxon>Dictyostelium</taxon>
    </lineage>
</organism>